<comment type="function">
    <text evidence="1">F(1)F(0) ATP synthase produces ATP from ADP in the presence of a proton or sodium gradient. F-type ATPases consist of two structural domains, F(1) containing the extramembraneous catalytic core and F(0) containing the membrane proton channel, linked together by a central stalk and a peripheral stalk. During catalysis, ATP synthesis in the catalytic domain of F(1) is coupled via a rotary mechanism of the central stalk subunits to proton translocation.</text>
</comment>
<comment type="function">
    <text evidence="1">This protein is part of the stalk that links CF(0) to CF(1). It either transmits conformational changes from CF(0) to CF(1) or is implicated in proton conduction.</text>
</comment>
<comment type="subunit">
    <text evidence="1">F-type ATPases have 2 components, F(1) - the catalytic core - and F(0) - the membrane proton channel. F(1) has five subunits: alpha(3), beta(3), gamma(1), delta(1), epsilon(1). F(0) has three main subunits: a(1), b(2) and c(10-14). The alpha and beta chains form an alternating ring which encloses part of the gamma chain. F(1) is attached to F(0) by a central stalk formed by the gamma and epsilon chains, while a peripheral stalk is formed by the delta and b chains.</text>
</comment>
<comment type="subcellular location">
    <subcellularLocation>
        <location evidence="1">Cell inner membrane</location>
        <topology evidence="1">Peripheral membrane protein</topology>
    </subcellularLocation>
</comment>
<comment type="similarity">
    <text evidence="1">Belongs to the ATPase delta chain family.</text>
</comment>
<dbReference type="EMBL" id="CP001120">
    <property type="protein sequence ID" value="ACF69478.1"/>
    <property type="molecule type" value="Genomic_DNA"/>
</dbReference>
<dbReference type="RefSeq" id="WP_001288957.1">
    <property type="nucleotide sequence ID" value="NC_011083.1"/>
</dbReference>
<dbReference type="SMR" id="B4TAX5"/>
<dbReference type="KEGG" id="seh:SeHA_C4199"/>
<dbReference type="HOGENOM" id="CLU_085114_3_0_6"/>
<dbReference type="Proteomes" id="UP000001866">
    <property type="component" value="Chromosome"/>
</dbReference>
<dbReference type="GO" id="GO:0005886">
    <property type="term" value="C:plasma membrane"/>
    <property type="evidence" value="ECO:0007669"/>
    <property type="project" value="UniProtKB-SubCell"/>
</dbReference>
<dbReference type="GO" id="GO:0045259">
    <property type="term" value="C:proton-transporting ATP synthase complex"/>
    <property type="evidence" value="ECO:0007669"/>
    <property type="project" value="UniProtKB-KW"/>
</dbReference>
<dbReference type="GO" id="GO:0046933">
    <property type="term" value="F:proton-transporting ATP synthase activity, rotational mechanism"/>
    <property type="evidence" value="ECO:0007669"/>
    <property type="project" value="UniProtKB-UniRule"/>
</dbReference>
<dbReference type="FunFam" id="1.10.520.20:FF:000001">
    <property type="entry name" value="ATP synthase subunit delta"/>
    <property type="match status" value="1"/>
</dbReference>
<dbReference type="Gene3D" id="1.10.520.20">
    <property type="entry name" value="N-terminal domain of the delta subunit of the F1F0-ATP synthase"/>
    <property type="match status" value="1"/>
</dbReference>
<dbReference type="HAMAP" id="MF_01416">
    <property type="entry name" value="ATP_synth_delta_bact"/>
    <property type="match status" value="1"/>
</dbReference>
<dbReference type="InterPro" id="IPR026015">
    <property type="entry name" value="ATP_synth_OSCP/delta_N_sf"/>
</dbReference>
<dbReference type="InterPro" id="IPR020781">
    <property type="entry name" value="ATPase_OSCP/d_CS"/>
</dbReference>
<dbReference type="InterPro" id="IPR000711">
    <property type="entry name" value="ATPase_OSCP/dsu"/>
</dbReference>
<dbReference type="NCBIfam" id="TIGR01145">
    <property type="entry name" value="ATP_synt_delta"/>
    <property type="match status" value="1"/>
</dbReference>
<dbReference type="NCBIfam" id="NF004402">
    <property type="entry name" value="PRK05758.2-2"/>
    <property type="match status" value="1"/>
</dbReference>
<dbReference type="NCBIfam" id="NF004404">
    <property type="entry name" value="PRK05758.2-5"/>
    <property type="match status" value="1"/>
</dbReference>
<dbReference type="PANTHER" id="PTHR11910">
    <property type="entry name" value="ATP SYNTHASE DELTA CHAIN"/>
    <property type="match status" value="1"/>
</dbReference>
<dbReference type="Pfam" id="PF00213">
    <property type="entry name" value="OSCP"/>
    <property type="match status" value="1"/>
</dbReference>
<dbReference type="PRINTS" id="PR00125">
    <property type="entry name" value="ATPASEDELTA"/>
</dbReference>
<dbReference type="SUPFAM" id="SSF47928">
    <property type="entry name" value="N-terminal domain of the delta subunit of the F1F0-ATP synthase"/>
    <property type="match status" value="1"/>
</dbReference>
<dbReference type="PROSITE" id="PS00389">
    <property type="entry name" value="ATPASE_DELTA"/>
    <property type="match status" value="1"/>
</dbReference>
<organism>
    <name type="scientific">Salmonella heidelberg (strain SL476)</name>
    <dbReference type="NCBI Taxonomy" id="454169"/>
    <lineage>
        <taxon>Bacteria</taxon>
        <taxon>Pseudomonadati</taxon>
        <taxon>Pseudomonadota</taxon>
        <taxon>Gammaproteobacteria</taxon>
        <taxon>Enterobacterales</taxon>
        <taxon>Enterobacteriaceae</taxon>
        <taxon>Salmonella</taxon>
    </lineage>
</organism>
<protein>
    <recommendedName>
        <fullName evidence="1">ATP synthase subunit delta</fullName>
    </recommendedName>
    <alternativeName>
        <fullName evidence="1">ATP synthase F(1) sector subunit delta</fullName>
    </alternativeName>
    <alternativeName>
        <fullName evidence="1">F-type ATPase subunit delta</fullName>
        <shortName evidence="1">F-ATPase subunit delta</shortName>
    </alternativeName>
</protein>
<keyword id="KW-0066">ATP synthesis</keyword>
<keyword id="KW-0997">Cell inner membrane</keyword>
<keyword id="KW-1003">Cell membrane</keyword>
<keyword id="KW-0139">CF(1)</keyword>
<keyword id="KW-0375">Hydrogen ion transport</keyword>
<keyword id="KW-0406">Ion transport</keyword>
<keyword id="KW-0472">Membrane</keyword>
<keyword id="KW-0813">Transport</keyword>
<proteinExistence type="inferred from homology"/>
<feature type="chain" id="PRO_0000371117" description="ATP synthase subunit delta">
    <location>
        <begin position="1"/>
        <end position="177"/>
    </location>
</feature>
<evidence type="ECO:0000255" key="1">
    <source>
        <dbReference type="HAMAP-Rule" id="MF_01416"/>
    </source>
</evidence>
<name>ATPD_SALHS</name>
<reference key="1">
    <citation type="journal article" date="2011" name="J. Bacteriol.">
        <title>Comparative genomics of 28 Salmonella enterica isolates: evidence for CRISPR-mediated adaptive sublineage evolution.</title>
        <authorList>
            <person name="Fricke W.F."/>
            <person name="Mammel M.K."/>
            <person name="McDermott P.F."/>
            <person name="Tartera C."/>
            <person name="White D.G."/>
            <person name="Leclerc J.E."/>
            <person name="Ravel J."/>
            <person name="Cebula T.A."/>
        </authorList>
    </citation>
    <scope>NUCLEOTIDE SEQUENCE [LARGE SCALE GENOMIC DNA]</scope>
    <source>
        <strain>SL476</strain>
    </source>
</reference>
<accession>B4TAX5</accession>
<gene>
    <name evidence="1" type="primary">atpH</name>
    <name type="ordered locus">SeHA_C4199</name>
</gene>
<sequence length="177" mass="19412">MSEFVTVARPYAKAAFDFAVEHQSVERWQDMLAFAAEVTKNEQMAELLSGALAPETLAESFIAVCGEQLDENGQNLIRVMAENNRLNALPDVLEQFIHLRAASEATSEVEVTSATALSEEQLSKISAAMEKRLSRKVKLNCKIDKSVMAGVIIRAGDMVIDGSVRGRLERLADVLQS</sequence>